<proteinExistence type="inferred from homology"/>
<protein>
    <recommendedName>
        <fullName evidence="1">Protein nucleotidyltransferase YdiU</fullName>
        <ecNumber evidence="1">2.7.7.-</ecNumber>
    </recommendedName>
    <alternativeName>
        <fullName evidence="1">Protein adenylyltransferase YdiU</fullName>
        <ecNumber evidence="1">2.7.7.108</ecNumber>
    </alternativeName>
    <alternativeName>
        <fullName evidence="1">Protein uridylyltransferase YdiU</fullName>
        <ecNumber evidence="1">2.7.7.-</ecNumber>
    </alternativeName>
</protein>
<keyword id="KW-0067">ATP-binding</keyword>
<keyword id="KW-0460">Magnesium</keyword>
<keyword id="KW-0464">Manganese</keyword>
<keyword id="KW-0479">Metal-binding</keyword>
<keyword id="KW-0547">Nucleotide-binding</keyword>
<keyword id="KW-0548">Nucleotidyltransferase</keyword>
<keyword id="KW-1185">Reference proteome</keyword>
<keyword id="KW-0808">Transferase</keyword>
<dbReference type="EC" id="2.7.7.-" evidence="1"/>
<dbReference type="EC" id="2.7.7.108" evidence="1"/>
<dbReference type="EMBL" id="CP000462">
    <property type="protein sequence ID" value="ABK39273.1"/>
    <property type="molecule type" value="Genomic_DNA"/>
</dbReference>
<dbReference type="RefSeq" id="WP_011707787.1">
    <property type="nucleotide sequence ID" value="NC_008570.1"/>
</dbReference>
<dbReference type="RefSeq" id="YP_858551.1">
    <property type="nucleotide sequence ID" value="NC_008570.1"/>
</dbReference>
<dbReference type="SMR" id="A0KQK0"/>
<dbReference type="STRING" id="380703.AHA_4127"/>
<dbReference type="EnsemblBacteria" id="ABK39273">
    <property type="protein sequence ID" value="ABK39273"/>
    <property type="gene ID" value="AHA_4127"/>
</dbReference>
<dbReference type="GeneID" id="4487480"/>
<dbReference type="KEGG" id="aha:AHA_4127"/>
<dbReference type="PATRIC" id="fig|380703.7.peg.4087"/>
<dbReference type="eggNOG" id="COG0397">
    <property type="taxonomic scope" value="Bacteria"/>
</dbReference>
<dbReference type="HOGENOM" id="CLU_010245_4_1_6"/>
<dbReference type="OrthoDB" id="9776281at2"/>
<dbReference type="Proteomes" id="UP000000756">
    <property type="component" value="Chromosome"/>
</dbReference>
<dbReference type="GO" id="GO:0070733">
    <property type="term" value="F:AMPylase activity"/>
    <property type="evidence" value="ECO:0007669"/>
    <property type="project" value="RHEA"/>
</dbReference>
<dbReference type="GO" id="GO:0005524">
    <property type="term" value="F:ATP binding"/>
    <property type="evidence" value="ECO:0007669"/>
    <property type="project" value="UniProtKB-UniRule"/>
</dbReference>
<dbReference type="GO" id="GO:0000287">
    <property type="term" value="F:magnesium ion binding"/>
    <property type="evidence" value="ECO:0007669"/>
    <property type="project" value="UniProtKB-UniRule"/>
</dbReference>
<dbReference type="HAMAP" id="MF_00692">
    <property type="entry name" value="YdiU_SelO"/>
    <property type="match status" value="1"/>
</dbReference>
<dbReference type="InterPro" id="IPR003846">
    <property type="entry name" value="SelO"/>
</dbReference>
<dbReference type="NCBIfam" id="NF000658">
    <property type="entry name" value="PRK00029.1"/>
    <property type="match status" value="1"/>
</dbReference>
<dbReference type="PANTHER" id="PTHR32057">
    <property type="entry name" value="PROTEIN ADENYLYLTRANSFERASE SELO, MITOCHONDRIAL"/>
    <property type="match status" value="1"/>
</dbReference>
<dbReference type="PANTHER" id="PTHR32057:SF14">
    <property type="entry name" value="PROTEIN ADENYLYLTRANSFERASE SELO, MITOCHONDRIAL"/>
    <property type="match status" value="1"/>
</dbReference>
<dbReference type="Pfam" id="PF02696">
    <property type="entry name" value="SelO"/>
    <property type="match status" value="1"/>
</dbReference>
<name>SELO_AERHH</name>
<evidence type="ECO:0000255" key="1">
    <source>
        <dbReference type="HAMAP-Rule" id="MF_00692"/>
    </source>
</evidence>
<organism>
    <name type="scientific">Aeromonas hydrophila subsp. hydrophila (strain ATCC 7966 / DSM 30187 / BCRC 13018 / CCUG 14551 / JCM 1027 / KCTC 2358 / NCIMB 9240 / NCTC 8049)</name>
    <dbReference type="NCBI Taxonomy" id="380703"/>
    <lineage>
        <taxon>Bacteria</taxon>
        <taxon>Pseudomonadati</taxon>
        <taxon>Pseudomonadota</taxon>
        <taxon>Gammaproteobacteria</taxon>
        <taxon>Aeromonadales</taxon>
        <taxon>Aeromonadaceae</taxon>
        <taxon>Aeromonas</taxon>
    </lineage>
</organism>
<reference key="1">
    <citation type="journal article" date="2006" name="J. Bacteriol.">
        <title>Genome sequence of Aeromonas hydrophila ATCC 7966T: jack of all trades.</title>
        <authorList>
            <person name="Seshadri R."/>
            <person name="Joseph S.W."/>
            <person name="Chopra A.K."/>
            <person name="Sha J."/>
            <person name="Shaw J."/>
            <person name="Graf J."/>
            <person name="Haft D.H."/>
            <person name="Wu M."/>
            <person name="Ren Q."/>
            <person name="Rosovitz M.J."/>
            <person name="Madupu R."/>
            <person name="Tallon L."/>
            <person name="Kim M."/>
            <person name="Jin S."/>
            <person name="Vuong H."/>
            <person name="Stine O.C."/>
            <person name="Ali A."/>
            <person name="Horneman A.J."/>
            <person name="Heidelberg J.F."/>
        </authorList>
    </citation>
    <scope>NUCLEOTIDE SEQUENCE [LARGE SCALE GENOMIC DNA]</scope>
    <source>
        <strain>ATCC 7966 / DSM 30187 / BCRC 13018 / CCUG 14551 / JCM 1027 / KCTC 2358 / NCIMB 9240 / NCTC 8049</strain>
    </source>
</reference>
<accession>A0KQK0</accession>
<gene>
    <name evidence="1" type="primary">ydiU</name>
    <name evidence="1" type="synonym">selO</name>
    <name type="ordered locus">AHA_4127</name>
</gene>
<feature type="chain" id="PRO_1000045235" description="Protein nucleotidyltransferase YdiU">
    <location>
        <begin position="1"/>
        <end position="475"/>
    </location>
</feature>
<feature type="active site" description="Proton acceptor" evidence="1">
    <location>
        <position position="240"/>
    </location>
</feature>
<feature type="binding site" evidence="1">
    <location>
        <position position="82"/>
    </location>
    <ligand>
        <name>ATP</name>
        <dbReference type="ChEBI" id="CHEBI:30616"/>
    </ligand>
</feature>
<feature type="binding site" evidence="1">
    <location>
        <position position="84"/>
    </location>
    <ligand>
        <name>ATP</name>
        <dbReference type="ChEBI" id="CHEBI:30616"/>
    </ligand>
</feature>
<feature type="binding site" evidence="1">
    <location>
        <position position="85"/>
    </location>
    <ligand>
        <name>ATP</name>
        <dbReference type="ChEBI" id="CHEBI:30616"/>
    </ligand>
</feature>
<feature type="binding site" evidence="1">
    <location>
        <position position="105"/>
    </location>
    <ligand>
        <name>ATP</name>
        <dbReference type="ChEBI" id="CHEBI:30616"/>
    </ligand>
</feature>
<feature type="binding site" evidence="1">
    <location>
        <position position="117"/>
    </location>
    <ligand>
        <name>ATP</name>
        <dbReference type="ChEBI" id="CHEBI:30616"/>
    </ligand>
</feature>
<feature type="binding site" evidence="1">
    <location>
        <position position="118"/>
    </location>
    <ligand>
        <name>ATP</name>
        <dbReference type="ChEBI" id="CHEBI:30616"/>
    </ligand>
</feature>
<feature type="binding site" evidence="1">
    <location>
        <position position="168"/>
    </location>
    <ligand>
        <name>ATP</name>
        <dbReference type="ChEBI" id="CHEBI:30616"/>
    </ligand>
</feature>
<feature type="binding site" evidence="1">
    <location>
        <position position="175"/>
    </location>
    <ligand>
        <name>ATP</name>
        <dbReference type="ChEBI" id="CHEBI:30616"/>
    </ligand>
</feature>
<feature type="binding site" evidence="1">
    <location>
        <position position="241"/>
    </location>
    <ligand>
        <name>Mg(2+)</name>
        <dbReference type="ChEBI" id="CHEBI:18420"/>
    </ligand>
</feature>
<feature type="binding site" evidence="1">
    <location>
        <position position="250"/>
    </location>
    <ligand>
        <name>ATP</name>
        <dbReference type="ChEBI" id="CHEBI:30616"/>
    </ligand>
</feature>
<feature type="binding site" evidence="1">
    <location>
        <position position="250"/>
    </location>
    <ligand>
        <name>Mg(2+)</name>
        <dbReference type="ChEBI" id="CHEBI:18420"/>
    </ligand>
</feature>
<sequence length="475" mass="52365">MKLINTFATELPWACEPVAPQPLHAPALLHLNCALLGELGLVAVSEADWLACCGHGQPLPGMQPVAQVYAGHQFGGYSPRLGDGRALLLGEQQAPDGSRWDLHLKGAGKTPFSRFGDGRAVLRSSIREYLASEALHALGIPTTRALVLVGSQEPVYREQVETGATVLRTAPSHLRFGHVEYFAWSGQGERIPALIDYLLRHHFPELADGAELFAEVVRRTARLIAKWQAAGFCHGVMNTDNMSLLGLTLDYGPYGFIDAYVPDFVCNHSDPGGRYALDQQPAVGYWNLQKLAQALAGHVDGDALAEALAQYEHQLMLHYSELMRAKLGLAVWEEDDPVLFRELFQLLAAHGVDYHLFLRRLGEVTREGAWPASLLALLPEPAAWQGWLEAYRARLAREGSEDGVRKGLMDAVNPKYVLRNALAQRVIEAAEQGDMAPFERLFTALQHPYDEQPEYEELATPQPAWYCGGELSCSS</sequence>
<comment type="function">
    <text evidence="1">Nucleotidyltransferase involved in the post-translational modification of proteins. It can catalyze the addition of adenosine monophosphate (AMP) or uridine monophosphate (UMP) to a protein, resulting in modifications known as AMPylation and UMPylation.</text>
</comment>
<comment type="catalytic activity">
    <reaction evidence="1">
        <text>L-seryl-[protein] + ATP = 3-O-(5'-adenylyl)-L-seryl-[protein] + diphosphate</text>
        <dbReference type="Rhea" id="RHEA:58120"/>
        <dbReference type="Rhea" id="RHEA-COMP:9863"/>
        <dbReference type="Rhea" id="RHEA-COMP:15073"/>
        <dbReference type="ChEBI" id="CHEBI:29999"/>
        <dbReference type="ChEBI" id="CHEBI:30616"/>
        <dbReference type="ChEBI" id="CHEBI:33019"/>
        <dbReference type="ChEBI" id="CHEBI:142516"/>
        <dbReference type="EC" id="2.7.7.108"/>
    </reaction>
</comment>
<comment type="catalytic activity">
    <reaction evidence="1">
        <text>L-threonyl-[protein] + ATP = 3-O-(5'-adenylyl)-L-threonyl-[protein] + diphosphate</text>
        <dbReference type="Rhea" id="RHEA:54292"/>
        <dbReference type="Rhea" id="RHEA-COMP:11060"/>
        <dbReference type="Rhea" id="RHEA-COMP:13847"/>
        <dbReference type="ChEBI" id="CHEBI:30013"/>
        <dbReference type="ChEBI" id="CHEBI:30616"/>
        <dbReference type="ChEBI" id="CHEBI:33019"/>
        <dbReference type="ChEBI" id="CHEBI:138113"/>
        <dbReference type="EC" id="2.7.7.108"/>
    </reaction>
</comment>
<comment type="catalytic activity">
    <reaction evidence="1">
        <text>L-tyrosyl-[protein] + ATP = O-(5'-adenylyl)-L-tyrosyl-[protein] + diphosphate</text>
        <dbReference type="Rhea" id="RHEA:54288"/>
        <dbReference type="Rhea" id="RHEA-COMP:10136"/>
        <dbReference type="Rhea" id="RHEA-COMP:13846"/>
        <dbReference type="ChEBI" id="CHEBI:30616"/>
        <dbReference type="ChEBI" id="CHEBI:33019"/>
        <dbReference type="ChEBI" id="CHEBI:46858"/>
        <dbReference type="ChEBI" id="CHEBI:83624"/>
        <dbReference type="EC" id="2.7.7.108"/>
    </reaction>
</comment>
<comment type="catalytic activity">
    <reaction evidence="1">
        <text>L-histidyl-[protein] + UTP = N(tele)-(5'-uridylyl)-L-histidyl-[protein] + diphosphate</text>
        <dbReference type="Rhea" id="RHEA:83891"/>
        <dbReference type="Rhea" id="RHEA-COMP:9745"/>
        <dbReference type="Rhea" id="RHEA-COMP:20239"/>
        <dbReference type="ChEBI" id="CHEBI:29979"/>
        <dbReference type="ChEBI" id="CHEBI:33019"/>
        <dbReference type="ChEBI" id="CHEBI:46398"/>
        <dbReference type="ChEBI" id="CHEBI:233474"/>
    </reaction>
</comment>
<comment type="catalytic activity">
    <reaction evidence="1">
        <text>L-seryl-[protein] + UTP = O-(5'-uridylyl)-L-seryl-[protein] + diphosphate</text>
        <dbReference type="Rhea" id="RHEA:64604"/>
        <dbReference type="Rhea" id="RHEA-COMP:9863"/>
        <dbReference type="Rhea" id="RHEA-COMP:16635"/>
        <dbReference type="ChEBI" id="CHEBI:29999"/>
        <dbReference type="ChEBI" id="CHEBI:33019"/>
        <dbReference type="ChEBI" id="CHEBI:46398"/>
        <dbReference type="ChEBI" id="CHEBI:156051"/>
    </reaction>
</comment>
<comment type="catalytic activity">
    <reaction evidence="1">
        <text>L-tyrosyl-[protein] + UTP = O-(5'-uridylyl)-L-tyrosyl-[protein] + diphosphate</text>
        <dbReference type="Rhea" id="RHEA:83887"/>
        <dbReference type="Rhea" id="RHEA-COMP:10136"/>
        <dbReference type="Rhea" id="RHEA-COMP:20238"/>
        <dbReference type="ChEBI" id="CHEBI:33019"/>
        <dbReference type="ChEBI" id="CHEBI:46398"/>
        <dbReference type="ChEBI" id="CHEBI:46858"/>
        <dbReference type="ChEBI" id="CHEBI:90602"/>
    </reaction>
</comment>
<comment type="cofactor">
    <cofactor evidence="1">
        <name>Mg(2+)</name>
        <dbReference type="ChEBI" id="CHEBI:18420"/>
    </cofactor>
    <cofactor evidence="1">
        <name>Mn(2+)</name>
        <dbReference type="ChEBI" id="CHEBI:29035"/>
    </cofactor>
</comment>
<comment type="similarity">
    <text evidence="1">Belongs to the SELO family.</text>
</comment>